<name>ACCA_DESHY</name>
<comment type="function">
    <text evidence="1">Component of the acetyl coenzyme A carboxylase (ACC) complex. First, biotin carboxylase catalyzes the carboxylation of biotin on its carrier protein (BCCP) and then the CO(2) group is transferred by the carboxyltransferase to acetyl-CoA to form malonyl-CoA.</text>
</comment>
<comment type="catalytic activity">
    <reaction evidence="1">
        <text>N(6)-carboxybiotinyl-L-lysyl-[protein] + acetyl-CoA = N(6)-biotinyl-L-lysyl-[protein] + malonyl-CoA</text>
        <dbReference type="Rhea" id="RHEA:54728"/>
        <dbReference type="Rhea" id="RHEA-COMP:10505"/>
        <dbReference type="Rhea" id="RHEA-COMP:10506"/>
        <dbReference type="ChEBI" id="CHEBI:57288"/>
        <dbReference type="ChEBI" id="CHEBI:57384"/>
        <dbReference type="ChEBI" id="CHEBI:83144"/>
        <dbReference type="ChEBI" id="CHEBI:83145"/>
        <dbReference type="EC" id="2.1.3.15"/>
    </reaction>
</comment>
<comment type="pathway">
    <text evidence="1">Lipid metabolism; malonyl-CoA biosynthesis; malonyl-CoA from acetyl-CoA: step 1/1.</text>
</comment>
<comment type="subunit">
    <text evidence="1">Acetyl-CoA carboxylase is a heterohexamer composed of biotin carboxyl carrier protein (AccB), biotin carboxylase (AccC) and two subunits each of ACCase subunit alpha (AccA) and ACCase subunit beta (AccD).</text>
</comment>
<comment type="subcellular location">
    <subcellularLocation>
        <location evidence="1">Cytoplasm</location>
    </subcellularLocation>
</comment>
<comment type="similarity">
    <text evidence="1">Belongs to the AccA family.</text>
</comment>
<accession>Q24XY7</accession>
<proteinExistence type="inferred from homology"/>
<keyword id="KW-0067">ATP-binding</keyword>
<keyword id="KW-0963">Cytoplasm</keyword>
<keyword id="KW-0275">Fatty acid biosynthesis</keyword>
<keyword id="KW-0276">Fatty acid metabolism</keyword>
<keyword id="KW-0444">Lipid biosynthesis</keyword>
<keyword id="KW-0443">Lipid metabolism</keyword>
<keyword id="KW-0547">Nucleotide-binding</keyword>
<keyword id="KW-1185">Reference proteome</keyword>
<keyword id="KW-0808">Transferase</keyword>
<gene>
    <name evidence="1" type="primary">accA</name>
    <name type="ordered locus">DSY1316</name>
</gene>
<dbReference type="EC" id="2.1.3.15" evidence="1"/>
<dbReference type="EMBL" id="AP008230">
    <property type="protein sequence ID" value="BAE83105.1"/>
    <property type="molecule type" value="Genomic_DNA"/>
</dbReference>
<dbReference type="RefSeq" id="WP_005814659.1">
    <property type="nucleotide sequence ID" value="NC_007907.1"/>
</dbReference>
<dbReference type="SMR" id="Q24XY7"/>
<dbReference type="STRING" id="138119.DSY1316"/>
<dbReference type="KEGG" id="dsy:DSY1316"/>
<dbReference type="eggNOG" id="COG0825">
    <property type="taxonomic scope" value="Bacteria"/>
</dbReference>
<dbReference type="HOGENOM" id="CLU_015486_0_2_9"/>
<dbReference type="UniPathway" id="UPA00655">
    <property type="reaction ID" value="UER00711"/>
</dbReference>
<dbReference type="Proteomes" id="UP000001946">
    <property type="component" value="Chromosome"/>
</dbReference>
<dbReference type="GO" id="GO:0009317">
    <property type="term" value="C:acetyl-CoA carboxylase complex"/>
    <property type="evidence" value="ECO:0007669"/>
    <property type="project" value="InterPro"/>
</dbReference>
<dbReference type="GO" id="GO:0003989">
    <property type="term" value="F:acetyl-CoA carboxylase activity"/>
    <property type="evidence" value="ECO:0007669"/>
    <property type="project" value="InterPro"/>
</dbReference>
<dbReference type="GO" id="GO:0005524">
    <property type="term" value="F:ATP binding"/>
    <property type="evidence" value="ECO:0007669"/>
    <property type="project" value="UniProtKB-KW"/>
</dbReference>
<dbReference type="GO" id="GO:0016743">
    <property type="term" value="F:carboxyl- or carbamoyltransferase activity"/>
    <property type="evidence" value="ECO:0007669"/>
    <property type="project" value="UniProtKB-UniRule"/>
</dbReference>
<dbReference type="GO" id="GO:0006633">
    <property type="term" value="P:fatty acid biosynthetic process"/>
    <property type="evidence" value="ECO:0007669"/>
    <property type="project" value="UniProtKB-KW"/>
</dbReference>
<dbReference type="GO" id="GO:2001295">
    <property type="term" value="P:malonyl-CoA biosynthetic process"/>
    <property type="evidence" value="ECO:0007669"/>
    <property type="project" value="UniProtKB-UniRule"/>
</dbReference>
<dbReference type="Gene3D" id="3.90.226.10">
    <property type="entry name" value="2-enoyl-CoA Hydratase, Chain A, domain 1"/>
    <property type="match status" value="1"/>
</dbReference>
<dbReference type="HAMAP" id="MF_00823">
    <property type="entry name" value="AcetylCoA_CT_alpha"/>
    <property type="match status" value="1"/>
</dbReference>
<dbReference type="InterPro" id="IPR001095">
    <property type="entry name" value="Acetyl_CoA_COase_a_su"/>
</dbReference>
<dbReference type="InterPro" id="IPR029045">
    <property type="entry name" value="ClpP/crotonase-like_dom_sf"/>
</dbReference>
<dbReference type="InterPro" id="IPR011763">
    <property type="entry name" value="COA_CT_C"/>
</dbReference>
<dbReference type="NCBIfam" id="TIGR00513">
    <property type="entry name" value="accA"/>
    <property type="match status" value="1"/>
</dbReference>
<dbReference type="NCBIfam" id="NF041504">
    <property type="entry name" value="AccA_sub"/>
    <property type="match status" value="1"/>
</dbReference>
<dbReference type="NCBIfam" id="NF004344">
    <property type="entry name" value="PRK05724.1"/>
    <property type="match status" value="1"/>
</dbReference>
<dbReference type="PANTHER" id="PTHR42853">
    <property type="entry name" value="ACETYL-COENZYME A CARBOXYLASE CARBOXYL TRANSFERASE SUBUNIT ALPHA"/>
    <property type="match status" value="1"/>
</dbReference>
<dbReference type="PANTHER" id="PTHR42853:SF3">
    <property type="entry name" value="ACETYL-COENZYME A CARBOXYLASE CARBOXYL TRANSFERASE SUBUNIT ALPHA, CHLOROPLASTIC"/>
    <property type="match status" value="1"/>
</dbReference>
<dbReference type="Pfam" id="PF03255">
    <property type="entry name" value="ACCA"/>
    <property type="match status" value="1"/>
</dbReference>
<dbReference type="PRINTS" id="PR01069">
    <property type="entry name" value="ACCCTRFRASEA"/>
</dbReference>
<dbReference type="SUPFAM" id="SSF52096">
    <property type="entry name" value="ClpP/crotonase"/>
    <property type="match status" value="1"/>
</dbReference>
<dbReference type="PROSITE" id="PS50989">
    <property type="entry name" value="COA_CT_CTER"/>
    <property type="match status" value="1"/>
</dbReference>
<sequence>MAQHFDFEKPILELEQKIAELQEFSKEKDINLSPEISKLMRRLVRLRKEIYGNLEPWQKVQIARHMERPNFYDYAPLLFEDFMEFKGDRLFADDKAIVGGIAIFQGIPVTVVSHIKGRGTKENIQRNFGMPHPEGYRKALRLMDQAEKFHRPILTFIDTPGAACDLEAEERGQGEAIARCLQAMAGYSVPIICTVIGEGGSGGALALGVGNKVLLLENSFYSVIAPESCASILWKDPGKAKEAASALKFTAQDLLELGIADGIIKEPLGGAHRSVERTAEEMKKTIAEALAELRELPPDELRTMRYEKLMNYGEFEEKA</sequence>
<reference key="1">
    <citation type="journal article" date="2006" name="J. Bacteriol.">
        <title>Complete genome sequence of the dehalorespiring bacterium Desulfitobacterium hafniense Y51 and comparison with Dehalococcoides ethenogenes 195.</title>
        <authorList>
            <person name="Nonaka H."/>
            <person name="Keresztes G."/>
            <person name="Shinoda Y."/>
            <person name="Ikenaga Y."/>
            <person name="Abe M."/>
            <person name="Naito K."/>
            <person name="Inatomi K."/>
            <person name="Furukawa K."/>
            <person name="Inui M."/>
            <person name="Yukawa H."/>
        </authorList>
    </citation>
    <scope>NUCLEOTIDE SEQUENCE [LARGE SCALE GENOMIC DNA]</scope>
    <source>
        <strain>Y51</strain>
    </source>
</reference>
<evidence type="ECO:0000255" key="1">
    <source>
        <dbReference type="HAMAP-Rule" id="MF_00823"/>
    </source>
</evidence>
<evidence type="ECO:0000255" key="2">
    <source>
        <dbReference type="PROSITE-ProRule" id="PRU01137"/>
    </source>
</evidence>
<organism>
    <name type="scientific">Desulfitobacterium hafniense (strain Y51)</name>
    <dbReference type="NCBI Taxonomy" id="138119"/>
    <lineage>
        <taxon>Bacteria</taxon>
        <taxon>Bacillati</taxon>
        <taxon>Bacillota</taxon>
        <taxon>Clostridia</taxon>
        <taxon>Eubacteriales</taxon>
        <taxon>Desulfitobacteriaceae</taxon>
        <taxon>Desulfitobacterium</taxon>
    </lineage>
</organism>
<feature type="chain" id="PRO_1000134481" description="Acetyl-coenzyme A carboxylase carboxyl transferase subunit alpha">
    <location>
        <begin position="1"/>
        <end position="319"/>
    </location>
</feature>
<feature type="domain" description="CoA carboxyltransferase C-terminal" evidence="2">
    <location>
        <begin position="35"/>
        <end position="292"/>
    </location>
</feature>
<protein>
    <recommendedName>
        <fullName evidence="1">Acetyl-coenzyme A carboxylase carboxyl transferase subunit alpha</fullName>
        <shortName evidence="1">ACCase subunit alpha</shortName>
        <shortName evidence="1">Acetyl-CoA carboxylase carboxyltransferase subunit alpha</shortName>
        <ecNumber evidence="1">2.1.3.15</ecNumber>
    </recommendedName>
</protein>